<accession>A1ST45</accession>
<reference key="1">
    <citation type="journal article" date="2008" name="BMC Genomics">
        <title>Genomics of an extreme psychrophile, Psychromonas ingrahamii.</title>
        <authorList>
            <person name="Riley M."/>
            <person name="Staley J.T."/>
            <person name="Danchin A."/>
            <person name="Wang T.Z."/>
            <person name="Brettin T.S."/>
            <person name="Hauser L.J."/>
            <person name="Land M.L."/>
            <person name="Thompson L.S."/>
        </authorList>
    </citation>
    <scope>NUCLEOTIDE SEQUENCE [LARGE SCALE GENOMIC DNA]</scope>
    <source>
        <strain>DSM 17664 / CCUG 51855 / 37</strain>
    </source>
</reference>
<feature type="chain" id="PRO_1000008309" description="Translation initiation factor IF-2">
    <location>
        <begin position="1"/>
        <end position="880"/>
    </location>
</feature>
<feature type="domain" description="tr-type G">
    <location>
        <begin position="380"/>
        <end position="549"/>
    </location>
</feature>
<feature type="region of interest" description="Disordered" evidence="3">
    <location>
        <begin position="51"/>
        <end position="78"/>
    </location>
</feature>
<feature type="region of interest" description="Disordered" evidence="3">
    <location>
        <begin position="93"/>
        <end position="116"/>
    </location>
</feature>
<feature type="region of interest" description="Disordered" evidence="3">
    <location>
        <begin position="142"/>
        <end position="293"/>
    </location>
</feature>
<feature type="region of interest" description="G1" evidence="1">
    <location>
        <begin position="389"/>
        <end position="396"/>
    </location>
</feature>
<feature type="region of interest" description="G2" evidence="1">
    <location>
        <begin position="414"/>
        <end position="418"/>
    </location>
</feature>
<feature type="region of interest" description="G3" evidence="1">
    <location>
        <begin position="435"/>
        <end position="438"/>
    </location>
</feature>
<feature type="region of interest" description="G4" evidence="1">
    <location>
        <begin position="489"/>
        <end position="492"/>
    </location>
</feature>
<feature type="region of interest" description="G5" evidence="1">
    <location>
        <begin position="525"/>
        <end position="527"/>
    </location>
</feature>
<feature type="compositionally biased region" description="Polar residues" evidence="3">
    <location>
        <begin position="69"/>
        <end position="78"/>
    </location>
</feature>
<feature type="compositionally biased region" description="Basic and acidic residues" evidence="3">
    <location>
        <begin position="142"/>
        <end position="229"/>
    </location>
</feature>
<feature type="compositionally biased region" description="Basic residues" evidence="3">
    <location>
        <begin position="269"/>
        <end position="279"/>
    </location>
</feature>
<feature type="binding site" evidence="2">
    <location>
        <begin position="389"/>
        <end position="396"/>
    </location>
    <ligand>
        <name>GTP</name>
        <dbReference type="ChEBI" id="CHEBI:37565"/>
    </ligand>
</feature>
<feature type="binding site" evidence="2">
    <location>
        <begin position="435"/>
        <end position="439"/>
    </location>
    <ligand>
        <name>GTP</name>
        <dbReference type="ChEBI" id="CHEBI:37565"/>
    </ligand>
</feature>
<feature type="binding site" evidence="2">
    <location>
        <begin position="489"/>
        <end position="492"/>
    </location>
    <ligand>
        <name>GTP</name>
        <dbReference type="ChEBI" id="CHEBI:37565"/>
    </ligand>
</feature>
<organism>
    <name type="scientific">Psychromonas ingrahamii (strain DSM 17664 / CCUG 51855 / 37)</name>
    <dbReference type="NCBI Taxonomy" id="357804"/>
    <lineage>
        <taxon>Bacteria</taxon>
        <taxon>Pseudomonadati</taxon>
        <taxon>Pseudomonadota</taxon>
        <taxon>Gammaproteobacteria</taxon>
        <taxon>Alteromonadales</taxon>
        <taxon>Psychromonadaceae</taxon>
        <taxon>Psychromonas</taxon>
    </lineage>
</organism>
<gene>
    <name evidence="2" type="primary">infB</name>
    <name type="ordered locus">Ping_0817</name>
</gene>
<keyword id="KW-0963">Cytoplasm</keyword>
<keyword id="KW-0342">GTP-binding</keyword>
<keyword id="KW-0396">Initiation factor</keyword>
<keyword id="KW-0547">Nucleotide-binding</keyword>
<keyword id="KW-0648">Protein biosynthesis</keyword>
<keyword id="KW-1185">Reference proteome</keyword>
<comment type="function">
    <text evidence="2">One of the essential components for the initiation of protein synthesis. Protects formylmethionyl-tRNA from spontaneous hydrolysis and promotes its binding to the 30S ribosomal subunits. Also involved in the hydrolysis of GTP during the formation of the 70S ribosomal complex.</text>
</comment>
<comment type="subcellular location">
    <subcellularLocation>
        <location evidence="2">Cytoplasm</location>
    </subcellularLocation>
</comment>
<comment type="similarity">
    <text evidence="2">Belongs to the TRAFAC class translation factor GTPase superfamily. Classic translation factor GTPase family. IF-2 subfamily.</text>
</comment>
<evidence type="ECO:0000250" key="1"/>
<evidence type="ECO:0000255" key="2">
    <source>
        <dbReference type="HAMAP-Rule" id="MF_00100"/>
    </source>
</evidence>
<evidence type="ECO:0000256" key="3">
    <source>
        <dbReference type="SAM" id="MobiDB-lite"/>
    </source>
</evidence>
<dbReference type="EMBL" id="CP000510">
    <property type="protein sequence ID" value="ABM02660.1"/>
    <property type="molecule type" value="Genomic_DNA"/>
</dbReference>
<dbReference type="RefSeq" id="WP_011769223.1">
    <property type="nucleotide sequence ID" value="NC_008709.1"/>
</dbReference>
<dbReference type="SMR" id="A1ST45"/>
<dbReference type="STRING" id="357804.Ping_0817"/>
<dbReference type="KEGG" id="pin:Ping_0817"/>
<dbReference type="eggNOG" id="COG0532">
    <property type="taxonomic scope" value="Bacteria"/>
</dbReference>
<dbReference type="eggNOG" id="COG3064">
    <property type="taxonomic scope" value="Bacteria"/>
</dbReference>
<dbReference type="HOGENOM" id="CLU_006301_6_3_6"/>
<dbReference type="OrthoDB" id="9811804at2"/>
<dbReference type="Proteomes" id="UP000000639">
    <property type="component" value="Chromosome"/>
</dbReference>
<dbReference type="GO" id="GO:0005829">
    <property type="term" value="C:cytosol"/>
    <property type="evidence" value="ECO:0007669"/>
    <property type="project" value="TreeGrafter"/>
</dbReference>
<dbReference type="GO" id="GO:0005525">
    <property type="term" value="F:GTP binding"/>
    <property type="evidence" value="ECO:0007669"/>
    <property type="project" value="UniProtKB-KW"/>
</dbReference>
<dbReference type="GO" id="GO:0003924">
    <property type="term" value="F:GTPase activity"/>
    <property type="evidence" value="ECO:0007669"/>
    <property type="project" value="UniProtKB-UniRule"/>
</dbReference>
<dbReference type="GO" id="GO:0097216">
    <property type="term" value="F:guanosine tetraphosphate binding"/>
    <property type="evidence" value="ECO:0007669"/>
    <property type="project" value="UniProtKB-ARBA"/>
</dbReference>
<dbReference type="GO" id="GO:0003743">
    <property type="term" value="F:translation initiation factor activity"/>
    <property type="evidence" value="ECO:0007669"/>
    <property type="project" value="UniProtKB-UniRule"/>
</dbReference>
<dbReference type="CDD" id="cd01887">
    <property type="entry name" value="IF2_eIF5B"/>
    <property type="match status" value="1"/>
</dbReference>
<dbReference type="CDD" id="cd03702">
    <property type="entry name" value="IF2_mtIF2_II"/>
    <property type="match status" value="1"/>
</dbReference>
<dbReference type="CDD" id="cd03692">
    <property type="entry name" value="mtIF2_IVc"/>
    <property type="match status" value="1"/>
</dbReference>
<dbReference type="FunFam" id="2.40.30.10:FF:000007">
    <property type="entry name" value="Translation initiation factor IF-2"/>
    <property type="match status" value="1"/>
</dbReference>
<dbReference type="FunFam" id="2.40.30.10:FF:000008">
    <property type="entry name" value="Translation initiation factor IF-2"/>
    <property type="match status" value="1"/>
</dbReference>
<dbReference type="FunFam" id="3.40.50.10050:FF:000001">
    <property type="entry name" value="Translation initiation factor IF-2"/>
    <property type="match status" value="1"/>
</dbReference>
<dbReference type="FunFam" id="3.40.50.300:FF:000019">
    <property type="entry name" value="Translation initiation factor IF-2"/>
    <property type="match status" value="1"/>
</dbReference>
<dbReference type="Gene3D" id="3.40.50.300">
    <property type="entry name" value="P-loop containing nucleotide triphosphate hydrolases"/>
    <property type="match status" value="1"/>
</dbReference>
<dbReference type="Gene3D" id="3.30.56.50">
    <property type="entry name" value="Putative DNA-binding domain, N-terminal subdomain of bacterial translation initiation factor IF2"/>
    <property type="match status" value="1"/>
</dbReference>
<dbReference type="Gene3D" id="2.40.30.10">
    <property type="entry name" value="Translation factors"/>
    <property type="match status" value="2"/>
</dbReference>
<dbReference type="Gene3D" id="3.40.50.10050">
    <property type="entry name" value="Translation initiation factor IF- 2, domain 3"/>
    <property type="match status" value="1"/>
</dbReference>
<dbReference type="HAMAP" id="MF_00100_B">
    <property type="entry name" value="IF_2_B"/>
    <property type="match status" value="1"/>
</dbReference>
<dbReference type="InterPro" id="IPR009061">
    <property type="entry name" value="DNA-bd_dom_put_sf"/>
</dbReference>
<dbReference type="InterPro" id="IPR053905">
    <property type="entry name" value="EF-G-like_DII"/>
</dbReference>
<dbReference type="InterPro" id="IPR004161">
    <property type="entry name" value="EFTu-like_2"/>
</dbReference>
<dbReference type="InterPro" id="IPR013575">
    <property type="entry name" value="IF2_assoc_dom_bac"/>
</dbReference>
<dbReference type="InterPro" id="IPR044145">
    <property type="entry name" value="IF2_II"/>
</dbReference>
<dbReference type="InterPro" id="IPR006847">
    <property type="entry name" value="IF2_N"/>
</dbReference>
<dbReference type="InterPro" id="IPR027417">
    <property type="entry name" value="P-loop_NTPase"/>
</dbReference>
<dbReference type="InterPro" id="IPR005225">
    <property type="entry name" value="Small_GTP-bd"/>
</dbReference>
<dbReference type="InterPro" id="IPR000795">
    <property type="entry name" value="T_Tr_GTP-bd_dom"/>
</dbReference>
<dbReference type="InterPro" id="IPR000178">
    <property type="entry name" value="TF_IF2_bacterial-like"/>
</dbReference>
<dbReference type="InterPro" id="IPR015760">
    <property type="entry name" value="TIF_IF2"/>
</dbReference>
<dbReference type="InterPro" id="IPR023115">
    <property type="entry name" value="TIF_IF2_dom3"/>
</dbReference>
<dbReference type="InterPro" id="IPR036925">
    <property type="entry name" value="TIF_IF2_dom3_sf"/>
</dbReference>
<dbReference type="InterPro" id="IPR009000">
    <property type="entry name" value="Transl_B-barrel_sf"/>
</dbReference>
<dbReference type="NCBIfam" id="TIGR00487">
    <property type="entry name" value="IF-2"/>
    <property type="match status" value="1"/>
</dbReference>
<dbReference type="NCBIfam" id="TIGR00231">
    <property type="entry name" value="small_GTP"/>
    <property type="match status" value="1"/>
</dbReference>
<dbReference type="PANTHER" id="PTHR43381:SF5">
    <property type="entry name" value="TR-TYPE G DOMAIN-CONTAINING PROTEIN"/>
    <property type="match status" value="1"/>
</dbReference>
<dbReference type="PANTHER" id="PTHR43381">
    <property type="entry name" value="TRANSLATION INITIATION FACTOR IF-2-RELATED"/>
    <property type="match status" value="1"/>
</dbReference>
<dbReference type="Pfam" id="PF22042">
    <property type="entry name" value="EF-G_D2"/>
    <property type="match status" value="1"/>
</dbReference>
<dbReference type="Pfam" id="PF00009">
    <property type="entry name" value="GTP_EFTU"/>
    <property type="match status" value="1"/>
</dbReference>
<dbReference type="Pfam" id="PF03144">
    <property type="entry name" value="GTP_EFTU_D2"/>
    <property type="match status" value="1"/>
</dbReference>
<dbReference type="Pfam" id="PF11987">
    <property type="entry name" value="IF-2"/>
    <property type="match status" value="1"/>
</dbReference>
<dbReference type="Pfam" id="PF08364">
    <property type="entry name" value="IF2_assoc"/>
    <property type="match status" value="1"/>
</dbReference>
<dbReference type="Pfam" id="PF04760">
    <property type="entry name" value="IF2_N"/>
    <property type="match status" value="2"/>
</dbReference>
<dbReference type="SUPFAM" id="SSF52156">
    <property type="entry name" value="Initiation factor IF2/eIF5b, domain 3"/>
    <property type="match status" value="1"/>
</dbReference>
<dbReference type="SUPFAM" id="SSF52540">
    <property type="entry name" value="P-loop containing nucleoside triphosphate hydrolases"/>
    <property type="match status" value="1"/>
</dbReference>
<dbReference type="SUPFAM" id="SSF46955">
    <property type="entry name" value="Putative DNA-binding domain"/>
    <property type="match status" value="1"/>
</dbReference>
<dbReference type="SUPFAM" id="SSF50447">
    <property type="entry name" value="Translation proteins"/>
    <property type="match status" value="2"/>
</dbReference>
<dbReference type="PROSITE" id="PS51722">
    <property type="entry name" value="G_TR_2"/>
    <property type="match status" value="1"/>
</dbReference>
<name>IF2_PSYIN</name>
<sequence length="880" mass="95351">MSDMSLKDLAKDLNKSEEILVKQFADAGIKKSASDKVSLAEKQTLTSFLQKQHGGESKTKMTLQRKTKSTLNVKGSTGQAKAVQVEVRKKRTYVKRSDSETQETQAAELADQQAANDKLQAEIEAKKLLVEKALAEKLAAKKEADEKAKKAAAANKEKQTAVKSEKTAEQIASEKESAALLKKADQEASAKAEKETAQQAADAKKLVEENSARWAEEETARKKAAEGGDYHITSSKEAQAAEDVLDSKAEGPSRRKKKKKAPVEEKFQGRRTRRGKKQRPATPSALQQAFEKPAAPVERNVRIGETITVAELANKMAVKATEVIKAMMKMGAMATINQVIDQETATIVAEEMGHKVILTKENELEEAVMAEAQQGGDRTSRAPVVTIMGHVDHGKTSLLDYIRRAKVADGEAGGITQHIGAYHVETDKGMISFLDTPGHAAFTSMRSRGAKATDIVILVVAADDGVMPQTIEAIQHAKAAKVPLIVAVNKIDKEGADFDRVKSELSQHNIISEEWGGENIFTYVSAKVGTGVDGLLESILLQAEMLDLSAVAKGPAAGVVIESRLDKGRGPVASILVQHGELKLGDILLCGLEYGRVRAMRDENGKPIEVAGPSIPVEVLGLSGVPMAGDEATVVKDEKKAREVALYRQGKFRDIKLARQQKAKLDNMFANMEAGEVSELNIVLKADVQGSLEAICESLNKLSTDEVKVNIIGRGVGGITETDASLASASGAIVIGFNVRADASARKLIENEGVDLHYYSIIYGLIDEVRAAMSGLLAPEYRQEITGIADVREVFKSPKIGAIAGCMVTEGTIKRNNPIRVLRENIVIYEGVLESLRRFRDDLSEVRNGMECGIGVKNYNDVRVGDQIEVFETIEIKRTL</sequence>
<protein>
    <recommendedName>
        <fullName evidence="2">Translation initiation factor IF-2</fullName>
    </recommendedName>
</protein>
<proteinExistence type="inferred from homology"/>